<evidence type="ECO:0000255" key="1">
    <source>
        <dbReference type="HAMAP-Rule" id="MF_00294"/>
    </source>
</evidence>
<evidence type="ECO:0000256" key="2">
    <source>
        <dbReference type="SAM" id="MobiDB-lite"/>
    </source>
</evidence>
<evidence type="ECO:0000305" key="3"/>
<comment type="similarity">
    <text evidence="1">Belongs to the bacterial ribosomal protein bL33 family.</text>
</comment>
<gene>
    <name evidence="1" type="primary">rpmG</name>
    <name type="ordered locus">BMA10229_A1022</name>
</gene>
<proteinExistence type="inferred from homology"/>
<keyword id="KW-0687">Ribonucleoprotein</keyword>
<keyword id="KW-0689">Ribosomal protein</keyword>
<name>RL33_BURM9</name>
<feature type="chain" id="PRO_1000115109" description="Large ribosomal subunit protein bL33">
    <location>
        <begin position="1"/>
        <end position="55"/>
    </location>
</feature>
<feature type="region of interest" description="Disordered" evidence="2">
    <location>
        <begin position="1"/>
        <end position="24"/>
    </location>
</feature>
<feature type="compositionally biased region" description="Basic and acidic residues" evidence="2">
    <location>
        <begin position="1"/>
        <end position="11"/>
    </location>
</feature>
<feature type="compositionally biased region" description="Polar residues" evidence="2">
    <location>
        <begin position="14"/>
        <end position="24"/>
    </location>
</feature>
<sequence>MAKGARDKIKLESTAGTGHFYTTTKNKRNMPEKMEIMKFDPVARKHVAYKETKIK</sequence>
<protein>
    <recommendedName>
        <fullName evidence="1">Large ribosomal subunit protein bL33</fullName>
    </recommendedName>
    <alternativeName>
        <fullName evidence="3">50S ribosomal protein L33</fullName>
    </alternativeName>
</protein>
<organism>
    <name type="scientific">Burkholderia mallei (strain NCTC 10229)</name>
    <dbReference type="NCBI Taxonomy" id="412022"/>
    <lineage>
        <taxon>Bacteria</taxon>
        <taxon>Pseudomonadati</taxon>
        <taxon>Pseudomonadota</taxon>
        <taxon>Betaproteobacteria</taxon>
        <taxon>Burkholderiales</taxon>
        <taxon>Burkholderiaceae</taxon>
        <taxon>Burkholderia</taxon>
        <taxon>pseudomallei group</taxon>
    </lineage>
</organism>
<dbReference type="EMBL" id="CP000546">
    <property type="protein sequence ID" value="ABN00775.1"/>
    <property type="molecule type" value="Genomic_DNA"/>
</dbReference>
<dbReference type="RefSeq" id="WP_004185395.1">
    <property type="nucleotide sequence ID" value="NC_008836.1"/>
</dbReference>
<dbReference type="SMR" id="A2S4Z0"/>
<dbReference type="GeneID" id="95550920"/>
<dbReference type="KEGG" id="bml:BMA10229_A1022"/>
<dbReference type="HOGENOM" id="CLU_190949_1_1_4"/>
<dbReference type="Proteomes" id="UP000002283">
    <property type="component" value="Chromosome I"/>
</dbReference>
<dbReference type="GO" id="GO:0022625">
    <property type="term" value="C:cytosolic large ribosomal subunit"/>
    <property type="evidence" value="ECO:0007669"/>
    <property type="project" value="TreeGrafter"/>
</dbReference>
<dbReference type="GO" id="GO:0003735">
    <property type="term" value="F:structural constituent of ribosome"/>
    <property type="evidence" value="ECO:0007669"/>
    <property type="project" value="InterPro"/>
</dbReference>
<dbReference type="GO" id="GO:0006412">
    <property type="term" value="P:translation"/>
    <property type="evidence" value="ECO:0007669"/>
    <property type="project" value="UniProtKB-UniRule"/>
</dbReference>
<dbReference type="FunFam" id="2.20.28.120:FF:000001">
    <property type="entry name" value="50S ribosomal protein L33"/>
    <property type="match status" value="1"/>
</dbReference>
<dbReference type="Gene3D" id="2.20.28.120">
    <property type="entry name" value="Ribosomal protein L33"/>
    <property type="match status" value="1"/>
</dbReference>
<dbReference type="HAMAP" id="MF_00294">
    <property type="entry name" value="Ribosomal_bL33"/>
    <property type="match status" value="1"/>
</dbReference>
<dbReference type="InterPro" id="IPR001705">
    <property type="entry name" value="Ribosomal_bL33"/>
</dbReference>
<dbReference type="InterPro" id="IPR018264">
    <property type="entry name" value="Ribosomal_bL33_CS"/>
</dbReference>
<dbReference type="InterPro" id="IPR038584">
    <property type="entry name" value="Ribosomal_bL33_sf"/>
</dbReference>
<dbReference type="InterPro" id="IPR011332">
    <property type="entry name" value="Ribosomal_zn-bd"/>
</dbReference>
<dbReference type="NCBIfam" id="NF001860">
    <property type="entry name" value="PRK00595.1"/>
    <property type="match status" value="1"/>
</dbReference>
<dbReference type="NCBIfam" id="TIGR01023">
    <property type="entry name" value="rpmG_bact"/>
    <property type="match status" value="1"/>
</dbReference>
<dbReference type="PANTHER" id="PTHR15238">
    <property type="entry name" value="54S RIBOSOMAL PROTEIN L39, MITOCHONDRIAL"/>
    <property type="match status" value="1"/>
</dbReference>
<dbReference type="PANTHER" id="PTHR15238:SF1">
    <property type="entry name" value="LARGE RIBOSOMAL SUBUNIT PROTEIN BL33M"/>
    <property type="match status" value="1"/>
</dbReference>
<dbReference type="Pfam" id="PF00471">
    <property type="entry name" value="Ribosomal_L33"/>
    <property type="match status" value="1"/>
</dbReference>
<dbReference type="SUPFAM" id="SSF57829">
    <property type="entry name" value="Zn-binding ribosomal proteins"/>
    <property type="match status" value="1"/>
</dbReference>
<dbReference type="PROSITE" id="PS00582">
    <property type="entry name" value="RIBOSOMAL_L33"/>
    <property type="match status" value="1"/>
</dbReference>
<accession>A2S4Z0</accession>
<reference key="1">
    <citation type="journal article" date="2010" name="Genome Biol. Evol.">
        <title>Continuing evolution of Burkholderia mallei through genome reduction and large-scale rearrangements.</title>
        <authorList>
            <person name="Losada L."/>
            <person name="Ronning C.M."/>
            <person name="DeShazer D."/>
            <person name="Woods D."/>
            <person name="Fedorova N."/>
            <person name="Kim H.S."/>
            <person name="Shabalina S.A."/>
            <person name="Pearson T.R."/>
            <person name="Brinkac L."/>
            <person name="Tan P."/>
            <person name="Nandi T."/>
            <person name="Crabtree J."/>
            <person name="Badger J."/>
            <person name="Beckstrom-Sternberg S."/>
            <person name="Saqib M."/>
            <person name="Schutzer S.E."/>
            <person name="Keim P."/>
            <person name="Nierman W.C."/>
        </authorList>
    </citation>
    <scope>NUCLEOTIDE SEQUENCE [LARGE SCALE GENOMIC DNA]</scope>
    <source>
        <strain>NCTC 10229</strain>
    </source>
</reference>